<evidence type="ECO:0000250" key="1"/>
<evidence type="ECO:0000255" key="2">
    <source>
        <dbReference type="HAMAP-Rule" id="MF_00054"/>
    </source>
</evidence>
<gene>
    <name evidence="2" type="primary">fusA</name>
    <name type="ordered locus">EcSMS35_3621</name>
</gene>
<keyword id="KW-0007">Acetylation</keyword>
<keyword id="KW-0963">Cytoplasm</keyword>
<keyword id="KW-0251">Elongation factor</keyword>
<keyword id="KW-0342">GTP-binding</keyword>
<keyword id="KW-0547">Nucleotide-binding</keyword>
<keyword id="KW-0648">Protein biosynthesis</keyword>
<protein>
    <recommendedName>
        <fullName evidence="2">Elongation factor G</fullName>
        <shortName evidence="2">EF-G</shortName>
    </recommendedName>
</protein>
<sequence length="704" mass="77581">MARTTPIARYRNIGISAHIDAGKTTTTERILFYTGVNHKIGEVHDGAATMDWMEQEQERGITITSAATTAFWSGMAKQYEPHRINIIDTPGHVDFTIEVERSMRVLDGAVMVYCAVGGVQPQSETVWRQANKYKVPRIAFVNKMDRMGANFLKVVNQIKTRLGANPVPLQLAIGAEEHFTGVVDLVKMKAINWNDADQGVTFEYEDIPADMVELANEWHQNLIESAAEASEELMEKYLGGEELTEAEIKGALRQRVLNNEIILVTCGSAFKNKGVQAMLDAVIDYLPSPVDVPAINGILDDGKDTPAERHASDDEPFSALAFKIATDPFVGNLTFFRVYSGVVNSGDTVLNSVKAARERFGRIVQMHANKREEIKEVRAGDIAAAIGLKDVTTGDTLCDPDAPIILERMEFPEPVISIAVEPKTKADQEKMGLALGRLAKEDPSFRVWTDEESNQTIIAGMGELHLDIIVDRMKREFNVEANVGKPQVAYRETIRQKVTDVEGKHAKQSGGRGQYGHVVIDMYPLEPGSNPKGYEFINDIKGGVIPGEYIPAVDKGIQEQLKAGPLAGYPVVDMGIRLHFGSYHDVDSSELAFKLAASIAFKEGFKKAKPVLLEPIMKVEVETPEENTGDVIGDLSRRRGMLKGQESEVTGVKIHAEVPLSEMFGYATQLRSLTKGRASYTMEFLKYDEAPSNVAQAVIEARGK</sequence>
<dbReference type="EMBL" id="CP000970">
    <property type="protein sequence ID" value="ACB17640.1"/>
    <property type="molecule type" value="Genomic_DNA"/>
</dbReference>
<dbReference type="RefSeq" id="WP_000124700.1">
    <property type="nucleotide sequence ID" value="NC_010498.1"/>
</dbReference>
<dbReference type="SMR" id="B1LHE0"/>
<dbReference type="GeneID" id="93778658"/>
<dbReference type="KEGG" id="ecm:EcSMS35_3621"/>
<dbReference type="HOGENOM" id="CLU_002794_4_1_6"/>
<dbReference type="Proteomes" id="UP000007011">
    <property type="component" value="Chromosome"/>
</dbReference>
<dbReference type="GO" id="GO:0005737">
    <property type="term" value="C:cytoplasm"/>
    <property type="evidence" value="ECO:0007669"/>
    <property type="project" value="UniProtKB-SubCell"/>
</dbReference>
<dbReference type="GO" id="GO:0005525">
    <property type="term" value="F:GTP binding"/>
    <property type="evidence" value="ECO:0007669"/>
    <property type="project" value="UniProtKB-UniRule"/>
</dbReference>
<dbReference type="GO" id="GO:0003924">
    <property type="term" value="F:GTPase activity"/>
    <property type="evidence" value="ECO:0007669"/>
    <property type="project" value="InterPro"/>
</dbReference>
<dbReference type="GO" id="GO:0097216">
    <property type="term" value="F:guanosine tetraphosphate binding"/>
    <property type="evidence" value="ECO:0007669"/>
    <property type="project" value="UniProtKB-ARBA"/>
</dbReference>
<dbReference type="GO" id="GO:0003746">
    <property type="term" value="F:translation elongation factor activity"/>
    <property type="evidence" value="ECO:0007669"/>
    <property type="project" value="UniProtKB-UniRule"/>
</dbReference>
<dbReference type="GO" id="GO:0032790">
    <property type="term" value="P:ribosome disassembly"/>
    <property type="evidence" value="ECO:0007669"/>
    <property type="project" value="TreeGrafter"/>
</dbReference>
<dbReference type="CDD" id="cd01886">
    <property type="entry name" value="EF-G"/>
    <property type="match status" value="1"/>
</dbReference>
<dbReference type="CDD" id="cd16262">
    <property type="entry name" value="EFG_III"/>
    <property type="match status" value="1"/>
</dbReference>
<dbReference type="CDD" id="cd01434">
    <property type="entry name" value="EFG_mtEFG1_IV"/>
    <property type="match status" value="1"/>
</dbReference>
<dbReference type="CDD" id="cd03713">
    <property type="entry name" value="EFG_mtEFG_C"/>
    <property type="match status" value="1"/>
</dbReference>
<dbReference type="CDD" id="cd04088">
    <property type="entry name" value="EFG_mtEFG_II"/>
    <property type="match status" value="1"/>
</dbReference>
<dbReference type="FunFam" id="2.40.30.10:FF:000006">
    <property type="entry name" value="Elongation factor G"/>
    <property type="match status" value="1"/>
</dbReference>
<dbReference type="FunFam" id="3.30.230.10:FF:000003">
    <property type="entry name" value="Elongation factor G"/>
    <property type="match status" value="1"/>
</dbReference>
<dbReference type="FunFam" id="3.30.70.240:FF:000001">
    <property type="entry name" value="Elongation factor G"/>
    <property type="match status" value="1"/>
</dbReference>
<dbReference type="FunFam" id="3.30.70.870:FF:000001">
    <property type="entry name" value="Elongation factor G"/>
    <property type="match status" value="1"/>
</dbReference>
<dbReference type="FunFam" id="3.40.50.300:FF:000029">
    <property type="entry name" value="Elongation factor G"/>
    <property type="match status" value="1"/>
</dbReference>
<dbReference type="Gene3D" id="3.30.230.10">
    <property type="match status" value="1"/>
</dbReference>
<dbReference type="Gene3D" id="3.30.70.240">
    <property type="match status" value="1"/>
</dbReference>
<dbReference type="Gene3D" id="3.30.70.870">
    <property type="entry name" value="Elongation Factor G (Translational Gtpase), domain 3"/>
    <property type="match status" value="1"/>
</dbReference>
<dbReference type="Gene3D" id="3.40.50.300">
    <property type="entry name" value="P-loop containing nucleotide triphosphate hydrolases"/>
    <property type="match status" value="1"/>
</dbReference>
<dbReference type="Gene3D" id="2.40.30.10">
    <property type="entry name" value="Translation factors"/>
    <property type="match status" value="1"/>
</dbReference>
<dbReference type="HAMAP" id="MF_00054_B">
    <property type="entry name" value="EF_G_EF_2_B"/>
    <property type="match status" value="1"/>
</dbReference>
<dbReference type="InterPro" id="IPR041095">
    <property type="entry name" value="EFG_II"/>
</dbReference>
<dbReference type="InterPro" id="IPR009022">
    <property type="entry name" value="EFG_III"/>
</dbReference>
<dbReference type="InterPro" id="IPR035647">
    <property type="entry name" value="EFG_III/V"/>
</dbReference>
<dbReference type="InterPro" id="IPR047872">
    <property type="entry name" value="EFG_IV"/>
</dbReference>
<dbReference type="InterPro" id="IPR035649">
    <property type="entry name" value="EFG_V"/>
</dbReference>
<dbReference type="InterPro" id="IPR000640">
    <property type="entry name" value="EFG_V-like"/>
</dbReference>
<dbReference type="InterPro" id="IPR004161">
    <property type="entry name" value="EFTu-like_2"/>
</dbReference>
<dbReference type="InterPro" id="IPR031157">
    <property type="entry name" value="G_TR_CS"/>
</dbReference>
<dbReference type="InterPro" id="IPR027417">
    <property type="entry name" value="P-loop_NTPase"/>
</dbReference>
<dbReference type="InterPro" id="IPR020568">
    <property type="entry name" value="Ribosomal_Su5_D2-typ_SF"/>
</dbReference>
<dbReference type="InterPro" id="IPR014721">
    <property type="entry name" value="Ribsml_uS5_D2-typ_fold_subgr"/>
</dbReference>
<dbReference type="InterPro" id="IPR005225">
    <property type="entry name" value="Small_GTP-bd"/>
</dbReference>
<dbReference type="InterPro" id="IPR000795">
    <property type="entry name" value="T_Tr_GTP-bd_dom"/>
</dbReference>
<dbReference type="InterPro" id="IPR009000">
    <property type="entry name" value="Transl_B-barrel_sf"/>
</dbReference>
<dbReference type="InterPro" id="IPR004540">
    <property type="entry name" value="Transl_elong_EFG/EF2"/>
</dbReference>
<dbReference type="InterPro" id="IPR005517">
    <property type="entry name" value="Transl_elong_EFG/EF2_IV"/>
</dbReference>
<dbReference type="NCBIfam" id="TIGR00484">
    <property type="entry name" value="EF-G"/>
    <property type="match status" value="1"/>
</dbReference>
<dbReference type="NCBIfam" id="NF009381">
    <property type="entry name" value="PRK12740.1-5"/>
    <property type="match status" value="1"/>
</dbReference>
<dbReference type="NCBIfam" id="TIGR00231">
    <property type="entry name" value="small_GTP"/>
    <property type="match status" value="1"/>
</dbReference>
<dbReference type="PANTHER" id="PTHR43261:SF1">
    <property type="entry name" value="RIBOSOME-RELEASING FACTOR 2, MITOCHONDRIAL"/>
    <property type="match status" value="1"/>
</dbReference>
<dbReference type="PANTHER" id="PTHR43261">
    <property type="entry name" value="TRANSLATION ELONGATION FACTOR G-RELATED"/>
    <property type="match status" value="1"/>
</dbReference>
<dbReference type="Pfam" id="PF00679">
    <property type="entry name" value="EFG_C"/>
    <property type="match status" value="1"/>
</dbReference>
<dbReference type="Pfam" id="PF14492">
    <property type="entry name" value="EFG_III"/>
    <property type="match status" value="1"/>
</dbReference>
<dbReference type="Pfam" id="PF03764">
    <property type="entry name" value="EFG_IV"/>
    <property type="match status" value="1"/>
</dbReference>
<dbReference type="Pfam" id="PF00009">
    <property type="entry name" value="GTP_EFTU"/>
    <property type="match status" value="1"/>
</dbReference>
<dbReference type="Pfam" id="PF03144">
    <property type="entry name" value="GTP_EFTU_D2"/>
    <property type="match status" value="1"/>
</dbReference>
<dbReference type="PRINTS" id="PR00315">
    <property type="entry name" value="ELONGATNFCT"/>
</dbReference>
<dbReference type="SMART" id="SM00838">
    <property type="entry name" value="EFG_C"/>
    <property type="match status" value="1"/>
</dbReference>
<dbReference type="SMART" id="SM00889">
    <property type="entry name" value="EFG_IV"/>
    <property type="match status" value="1"/>
</dbReference>
<dbReference type="SUPFAM" id="SSF54980">
    <property type="entry name" value="EF-G C-terminal domain-like"/>
    <property type="match status" value="2"/>
</dbReference>
<dbReference type="SUPFAM" id="SSF52540">
    <property type="entry name" value="P-loop containing nucleoside triphosphate hydrolases"/>
    <property type="match status" value="1"/>
</dbReference>
<dbReference type="SUPFAM" id="SSF54211">
    <property type="entry name" value="Ribosomal protein S5 domain 2-like"/>
    <property type="match status" value="1"/>
</dbReference>
<dbReference type="SUPFAM" id="SSF50447">
    <property type="entry name" value="Translation proteins"/>
    <property type="match status" value="1"/>
</dbReference>
<dbReference type="PROSITE" id="PS00301">
    <property type="entry name" value="G_TR_1"/>
    <property type="match status" value="1"/>
</dbReference>
<dbReference type="PROSITE" id="PS51722">
    <property type="entry name" value="G_TR_2"/>
    <property type="match status" value="1"/>
</dbReference>
<organism>
    <name type="scientific">Escherichia coli (strain SMS-3-5 / SECEC)</name>
    <dbReference type="NCBI Taxonomy" id="439855"/>
    <lineage>
        <taxon>Bacteria</taxon>
        <taxon>Pseudomonadati</taxon>
        <taxon>Pseudomonadota</taxon>
        <taxon>Gammaproteobacteria</taxon>
        <taxon>Enterobacterales</taxon>
        <taxon>Enterobacteriaceae</taxon>
        <taxon>Escherichia</taxon>
    </lineage>
</organism>
<reference key="1">
    <citation type="journal article" date="2008" name="J. Bacteriol.">
        <title>Insights into the environmental resistance gene pool from the genome sequence of the multidrug-resistant environmental isolate Escherichia coli SMS-3-5.</title>
        <authorList>
            <person name="Fricke W.F."/>
            <person name="Wright M.S."/>
            <person name="Lindell A.H."/>
            <person name="Harkins D.M."/>
            <person name="Baker-Austin C."/>
            <person name="Ravel J."/>
            <person name="Stepanauskas R."/>
        </authorList>
    </citation>
    <scope>NUCLEOTIDE SEQUENCE [LARGE SCALE GENOMIC DNA]</scope>
    <source>
        <strain>SMS-3-5 / SECEC</strain>
    </source>
</reference>
<name>EFG_ECOSM</name>
<accession>B1LHE0</accession>
<feature type="chain" id="PRO_1000201458" description="Elongation factor G">
    <location>
        <begin position="1"/>
        <end position="704"/>
    </location>
</feature>
<feature type="domain" description="tr-type G">
    <location>
        <begin position="8"/>
        <end position="290"/>
    </location>
</feature>
<feature type="binding site" evidence="2">
    <location>
        <begin position="17"/>
        <end position="24"/>
    </location>
    <ligand>
        <name>GTP</name>
        <dbReference type="ChEBI" id="CHEBI:37565"/>
    </ligand>
</feature>
<feature type="binding site" evidence="2">
    <location>
        <begin position="88"/>
        <end position="92"/>
    </location>
    <ligand>
        <name>GTP</name>
        <dbReference type="ChEBI" id="CHEBI:37565"/>
    </ligand>
</feature>
<feature type="binding site" evidence="2">
    <location>
        <begin position="142"/>
        <end position="145"/>
    </location>
    <ligand>
        <name>GTP</name>
        <dbReference type="ChEBI" id="CHEBI:37565"/>
    </ligand>
</feature>
<feature type="modified residue" description="N6-acetyllysine" evidence="1">
    <location>
        <position position="504"/>
    </location>
</feature>
<feature type="modified residue" description="N6-acetyllysine" evidence="1">
    <location>
        <position position="643"/>
    </location>
</feature>
<proteinExistence type="inferred from homology"/>
<comment type="function">
    <text evidence="2">Catalyzes the GTP-dependent ribosomal translocation step during translation elongation. During this step, the ribosome changes from the pre-translocational (PRE) to the post-translocational (POST) state as the newly formed A-site-bound peptidyl-tRNA and P-site-bound deacylated tRNA move to the P and E sites, respectively. Catalyzes the coordinated movement of the two tRNA molecules, the mRNA and conformational changes in the ribosome.</text>
</comment>
<comment type="subcellular location">
    <subcellularLocation>
        <location evidence="2">Cytoplasm</location>
    </subcellularLocation>
</comment>
<comment type="similarity">
    <text evidence="2">Belongs to the TRAFAC class translation factor GTPase superfamily. Classic translation factor GTPase family. EF-G/EF-2 subfamily.</text>
</comment>